<keyword id="KW-1185">Reference proteome</keyword>
<evidence type="ECO:0000255" key="1">
    <source>
        <dbReference type="PROSITE-ProRule" id="PRU01185"/>
    </source>
</evidence>
<evidence type="ECO:0000305" key="2"/>
<protein>
    <recommendedName>
        <fullName>PCI domain-containing protein 2 homolog</fullName>
    </recommendedName>
    <alternativeName>
        <fullName>CSN12-like protein</fullName>
    </alternativeName>
</protein>
<organism>
    <name type="scientific">Caenorhabditis elegans</name>
    <dbReference type="NCBI Taxonomy" id="6239"/>
    <lineage>
        <taxon>Eukaryota</taxon>
        <taxon>Metazoa</taxon>
        <taxon>Ecdysozoa</taxon>
        <taxon>Nematoda</taxon>
        <taxon>Chromadorea</taxon>
        <taxon>Rhabditida</taxon>
        <taxon>Rhabditina</taxon>
        <taxon>Rhabditomorpha</taxon>
        <taxon>Rhabditoidea</taxon>
        <taxon>Rhabditidae</taxon>
        <taxon>Peloderinae</taxon>
        <taxon>Caenorhabditis</taxon>
    </lineage>
</organism>
<dbReference type="EMBL" id="FO080681">
    <property type="protein sequence ID" value="CCD65746.1"/>
    <property type="molecule type" value="Genomic_DNA"/>
</dbReference>
<dbReference type="RefSeq" id="NP_498057.1">
    <property type="nucleotide sequence ID" value="NM_065656.9"/>
</dbReference>
<dbReference type="SMR" id="Q95QU0"/>
<dbReference type="BioGRID" id="40908">
    <property type="interactions" value="6"/>
</dbReference>
<dbReference type="FunCoup" id="Q95QU0">
    <property type="interactions" value="2797"/>
</dbReference>
<dbReference type="STRING" id="6239.C27F2.10.2"/>
<dbReference type="PaxDb" id="6239-C27F2.10"/>
<dbReference type="PeptideAtlas" id="Q95QU0"/>
<dbReference type="EnsemblMetazoa" id="C27F2.10.1">
    <property type="protein sequence ID" value="C27F2.10.1"/>
    <property type="gene ID" value="WBGene00016171"/>
</dbReference>
<dbReference type="GeneID" id="175675"/>
<dbReference type="KEGG" id="cel:CELE_C27F2.10"/>
<dbReference type="UCSC" id="C27F2.10.1">
    <property type="organism name" value="c. elegans"/>
</dbReference>
<dbReference type="AGR" id="WB:WBGene00016171"/>
<dbReference type="CTD" id="175675"/>
<dbReference type="WormBase" id="C27F2.10">
    <property type="protein sequence ID" value="CE29189"/>
    <property type="gene ID" value="WBGene00016171"/>
</dbReference>
<dbReference type="eggNOG" id="KOG2688">
    <property type="taxonomic scope" value="Eukaryota"/>
</dbReference>
<dbReference type="GeneTree" id="ENSGT00390000001101"/>
<dbReference type="HOGENOM" id="CLU_031567_2_0_1"/>
<dbReference type="InParanoid" id="Q95QU0"/>
<dbReference type="OMA" id="INRMFTL"/>
<dbReference type="OrthoDB" id="10252687at2759"/>
<dbReference type="PhylomeDB" id="Q95QU0"/>
<dbReference type="PRO" id="PR:Q95QU0"/>
<dbReference type="Proteomes" id="UP000001940">
    <property type="component" value="Chromosome III"/>
</dbReference>
<dbReference type="Bgee" id="WBGene00016171">
    <property type="expression patterns" value="Expressed in adult organism and 3 other cell types or tissues"/>
</dbReference>
<dbReference type="GO" id="GO:0070390">
    <property type="term" value="C:transcription export complex 2"/>
    <property type="evidence" value="ECO:0000318"/>
    <property type="project" value="GO_Central"/>
</dbReference>
<dbReference type="GO" id="GO:0003690">
    <property type="term" value="F:double-stranded DNA binding"/>
    <property type="evidence" value="ECO:0000318"/>
    <property type="project" value="GO_Central"/>
</dbReference>
<dbReference type="GO" id="GO:0003723">
    <property type="term" value="F:RNA binding"/>
    <property type="evidence" value="ECO:0000318"/>
    <property type="project" value="GO_Central"/>
</dbReference>
<dbReference type="GO" id="GO:0016973">
    <property type="term" value="P:poly(A)+ mRNA export from nucleus"/>
    <property type="evidence" value="ECO:0000318"/>
    <property type="project" value="GO_Central"/>
</dbReference>
<dbReference type="GO" id="GO:0000973">
    <property type="term" value="P:post-transcriptional tethering of RNA polymerase II gene DNA at nuclear periphery"/>
    <property type="evidence" value="ECO:0000318"/>
    <property type="project" value="GO_Central"/>
</dbReference>
<dbReference type="GO" id="GO:0006368">
    <property type="term" value="P:transcription elongation by RNA polymerase II"/>
    <property type="evidence" value="ECO:0000318"/>
    <property type="project" value="GO_Central"/>
</dbReference>
<dbReference type="FunFam" id="1.10.10.10:FF:000146">
    <property type="entry name" value="PCI domain-containing protein 2 homolog"/>
    <property type="match status" value="1"/>
</dbReference>
<dbReference type="Gene3D" id="1.10.10.10">
    <property type="entry name" value="Winged helix-like DNA-binding domain superfamily/Winged helix DNA-binding domain"/>
    <property type="match status" value="1"/>
</dbReference>
<dbReference type="InterPro" id="IPR045114">
    <property type="entry name" value="Csn12-like"/>
</dbReference>
<dbReference type="InterPro" id="IPR000717">
    <property type="entry name" value="PCI_dom"/>
</dbReference>
<dbReference type="InterPro" id="IPR036388">
    <property type="entry name" value="WH-like_DNA-bd_sf"/>
</dbReference>
<dbReference type="PANTHER" id="PTHR12732:SF0">
    <property type="entry name" value="PCI DOMAIN-CONTAINING PROTEIN 2"/>
    <property type="match status" value="1"/>
</dbReference>
<dbReference type="PANTHER" id="PTHR12732">
    <property type="entry name" value="UNCHARACTERIZED PROTEASOME COMPONENT REGION PCI-CONTAINING"/>
    <property type="match status" value="1"/>
</dbReference>
<dbReference type="Pfam" id="PF01399">
    <property type="entry name" value="PCI"/>
    <property type="match status" value="1"/>
</dbReference>
<dbReference type="SMART" id="SM00753">
    <property type="entry name" value="PAM"/>
    <property type="match status" value="1"/>
</dbReference>
<dbReference type="PROSITE" id="PS50250">
    <property type="entry name" value="PCI"/>
    <property type="match status" value="1"/>
</dbReference>
<sequence length="413" mass="47157">MPSVRSIEDYFGQIESLLYRQDWTNGEKISKFVSTYDEHAQEPFMHIEAYGSRSKRCRVSEDEVFDEIVCLHLHVLYNIHVAQDLITAQSTQIQIIQLFNKEILQKRKDENWFLPIFYRLCTDLRWLSKGAEACVSGDDEGDSNANSFFESAAKAITECYRTCVSDVHAEEGTTKKVAMLNMTNQLFQIYFQINKLNLLKPLIRAIDNCGSLYHDFLMSDKVAYNYFLGRKAMFDADLNLAEKSLLYAFRNCPADSMSNKRKILIYLIPVKMFLGHMPTSQLLHEYRLDEFQDVVAGVKDGNLAQLDGALAANEAFFIKCGIFLMLEKLRMITFRTLFKKVSQIVGTAQIPLDAFQTALRFVGVTDVDMDELECIIANLIASKKIKGYLSHQHQKLVISKMNAFPTLSGVSSN</sequence>
<proteinExistence type="inferred from homology"/>
<feature type="chain" id="PRO_0000121034" description="PCI domain-containing protein 2 homolog">
    <location>
        <begin position="1"/>
        <end position="413"/>
    </location>
</feature>
<feature type="domain" description="PCI" evidence="1">
    <location>
        <begin position="222"/>
        <end position="403"/>
    </location>
</feature>
<accession>Q95QU0</accession>
<gene>
    <name type="ORF">C27F2.10</name>
</gene>
<name>PCID2_CAEEL</name>
<reference key="1">
    <citation type="journal article" date="1998" name="Science">
        <title>Genome sequence of the nematode C. elegans: a platform for investigating biology.</title>
        <authorList>
            <consortium name="The C. elegans sequencing consortium"/>
        </authorList>
    </citation>
    <scope>NUCLEOTIDE SEQUENCE [LARGE SCALE GENOMIC DNA]</scope>
    <source>
        <strain>Bristol N2</strain>
    </source>
</reference>
<comment type="similarity">
    <text evidence="2">Belongs to the CSN12 family.</text>
</comment>